<reference key="1">
    <citation type="journal article" date="2004" name="J. Bacteriol.">
        <title>Comparative genomics of two Leptospira interrogans serovars reveals novel insights into physiology and pathogenesis.</title>
        <authorList>
            <person name="Nascimento A.L.T.O."/>
            <person name="Ko A.I."/>
            <person name="Martins E.A.L."/>
            <person name="Monteiro-Vitorello C.B."/>
            <person name="Ho P.L."/>
            <person name="Haake D.A."/>
            <person name="Verjovski-Almeida S."/>
            <person name="Hartskeerl R.A."/>
            <person name="Marques M.V."/>
            <person name="Oliveira M.C."/>
            <person name="Menck C.F.M."/>
            <person name="Leite L.C.C."/>
            <person name="Carrer H."/>
            <person name="Coutinho L.L."/>
            <person name="Degrave W.M."/>
            <person name="Dellagostin O.A."/>
            <person name="El-Dorry H."/>
            <person name="Ferro E.S."/>
            <person name="Ferro M.I.T."/>
            <person name="Furlan L.R."/>
            <person name="Gamberini M."/>
            <person name="Giglioti E.A."/>
            <person name="Goes-Neto A."/>
            <person name="Goldman G.H."/>
            <person name="Goldman M.H.S."/>
            <person name="Harakava R."/>
            <person name="Jeronimo S.M.B."/>
            <person name="Junqueira-de-Azevedo I.L.M."/>
            <person name="Kimura E.T."/>
            <person name="Kuramae E.E."/>
            <person name="Lemos E.G.M."/>
            <person name="Lemos M.V.F."/>
            <person name="Marino C.L."/>
            <person name="Nunes L.R."/>
            <person name="de Oliveira R.C."/>
            <person name="Pereira G.G."/>
            <person name="Reis M.S."/>
            <person name="Schriefer A."/>
            <person name="Siqueira W.J."/>
            <person name="Sommer P."/>
            <person name="Tsai S.M."/>
            <person name="Simpson A.J.G."/>
            <person name="Ferro J.A."/>
            <person name="Camargo L.E.A."/>
            <person name="Kitajima J.P."/>
            <person name="Setubal J.C."/>
            <person name="Van Sluys M.A."/>
        </authorList>
    </citation>
    <scope>NUCLEOTIDE SEQUENCE [LARGE SCALE GENOMIC DNA]</scope>
    <source>
        <strain>Fiocruz L1-130</strain>
    </source>
</reference>
<proteinExistence type="inferred from homology"/>
<feature type="chain" id="PRO_0000131285" description="Large ribosomal subunit protein uL18">
    <location>
        <begin position="1"/>
        <end position="122"/>
    </location>
</feature>
<gene>
    <name evidence="1" type="primary">rplR</name>
    <name type="ordered locus">LIC_12857</name>
</gene>
<evidence type="ECO:0000255" key="1">
    <source>
        <dbReference type="HAMAP-Rule" id="MF_01337"/>
    </source>
</evidence>
<evidence type="ECO:0000305" key="2"/>
<accession>Q72NH7</accession>
<name>RL18_LEPIC</name>
<organism>
    <name type="scientific">Leptospira interrogans serogroup Icterohaemorrhagiae serovar copenhageni (strain Fiocruz L1-130)</name>
    <dbReference type="NCBI Taxonomy" id="267671"/>
    <lineage>
        <taxon>Bacteria</taxon>
        <taxon>Pseudomonadati</taxon>
        <taxon>Spirochaetota</taxon>
        <taxon>Spirochaetia</taxon>
        <taxon>Leptospirales</taxon>
        <taxon>Leptospiraceae</taxon>
        <taxon>Leptospira</taxon>
    </lineage>
</organism>
<comment type="function">
    <text evidence="1">This is one of the proteins that bind and probably mediate the attachment of the 5S RNA into the large ribosomal subunit, where it forms part of the central protuberance.</text>
</comment>
<comment type="subunit">
    <text evidence="1">Part of the 50S ribosomal subunit; part of the 5S rRNA/L5/L18/L25 subcomplex. Contacts the 5S and 23S rRNAs.</text>
</comment>
<comment type="similarity">
    <text evidence="1">Belongs to the universal ribosomal protein uL18 family.</text>
</comment>
<keyword id="KW-0687">Ribonucleoprotein</keyword>
<keyword id="KW-0689">Ribosomal protein</keyword>
<keyword id="KW-0694">RNA-binding</keyword>
<keyword id="KW-0699">rRNA-binding</keyword>
<dbReference type="EMBL" id="AE016823">
    <property type="protein sequence ID" value="AAS71410.1"/>
    <property type="molecule type" value="Genomic_DNA"/>
</dbReference>
<dbReference type="RefSeq" id="WP_000567189.1">
    <property type="nucleotide sequence ID" value="NC_005823.1"/>
</dbReference>
<dbReference type="SMR" id="Q72NH7"/>
<dbReference type="GeneID" id="61142731"/>
<dbReference type="KEGG" id="lic:LIC_12857"/>
<dbReference type="HOGENOM" id="CLU_098841_0_1_12"/>
<dbReference type="Proteomes" id="UP000007037">
    <property type="component" value="Chromosome I"/>
</dbReference>
<dbReference type="GO" id="GO:0022625">
    <property type="term" value="C:cytosolic large ribosomal subunit"/>
    <property type="evidence" value="ECO:0007669"/>
    <property type="project" value="TreeGrafter"/>
</dbReference>
<dbReference type="GO" id="GO:0008097">
    <property type="term" value="F:5S rRNA binding"/>
    <property type="evidence" value="ECO:0007669"/>
    <property type="project" value="TreeGrafter"/>
</dbReference>
<dbReference type="GO" id="GO:0003735">
    <property type="term" value="F:structural constituent of ribosome"/>
    <property type="evidence" value="ECO:0007669"/>
    <property type="project" value="InterPro"/>
</dbReference>
<dbReference type="GO" id="GO:0006412">
    <property type="term" value="P:translation"/>
    <property type="evidence" value="ECO:0007669"/>
    <property type="project" value="UniProtKB-UniRule"/>
</dbReference>
<dbReference type="CDD" id="cd00432">
    <property type="entry name" value="Ribosomal_L18_L5e"/>
    <property type="match status" value="1"/>
</dbReference>
<dbReference type="FunFam" id="3.30.420.100:FF:000001">
    <property type="entry name" value="50S ribosomal protein L18"/>
    <property type="match status" value="1"/>
</dbReference>
<dbReference type="Gene3D" id="3.30.420.100">
    <property type="match status" value="1"/>
</dbReference>
<dbReference type="HAMAP" id="MF_01337_B">
    <property type="entry name" value="Ribosomal_uL18_B"/>
    <property type="match status" value="1"/>
</dbReference>
<dbReference type="InterPro" id="IPR004389">
    <property type="entry name" value="Ribosomal_uL18_bac-type"/>
</dbReference>
<dbReference type="InterPro" id="IPR005484">
    <property type="entry name" value="Ribosomal_uL18_bac/euk"/>
</dbReference>
<dbReference type="NCBIfam" id="TIGR00060">
    <property type="entry name" value="L18_bact"/>
    <property type="match status" value="1"/>
</dbReference>
<dbReference type="PANTHER" id="PTHR12899">
    <property type="entry name" value="39S RIBOSOMAL PROTEIN L18, MITOCHONDRIAL"/>
    <property type="match status" value="1"/>
</dbReference>
<dbReference type="PANTHER" id="PTHR12899:SF3">
    <property type="entry name" value="LARGE RIBOSOMAL SUBUNIT PROTEIN UL18M"/>
    <property type="match status" value="1"/>
</dbReference>
<dbReference type="Pfam" id="PF00861">
    <property type="entry name" value="Ribosomal_L18p"/>
    <property type="match status" value="1"/>
</dbReference>
<dbReference type="SUPFAM" id="SSF53137">
    <property type="entry name" value="Translational machinery components"/>
    <property type="match status" value="1"/>
</dbReference>
<sequence>MIDRLKKSISKTKRAERSRFKLKKLGSRPRLVFIKSNQYLSCQIIDDIQGVTLAYATTSEKTFTGEGKSKKDKGAAKVLGKLIAERGSQKGVKQVMLDRSGMIFHGRIAAFAEGAREAGLEF</sequence>
<protein>
    <recommendedName>
        <fullName evidence="1">Large ribosomal subunit protein uL18</fullName>
    </recommendedName>
    <alternativeName>
        <fullName evidence="2">50S ribosomal protein L18</fullName>
    </alternativeName>
</protein>